<gene>
    <name type="primary">MT-CYB</name>
    <name type="synonym">COB</name>
    <name type="synonym">CYTB</name>
    <name type="synonym">MTCYB</name>
</gene>
<dbReference type="EMBL" id="AF007056">
    <property type="protein sequence ID" value="AAB69215.1"/>
    <property type="molecule type" value="Genomic_DNA"/>
</dbReference>
<dbReference type="SMR" id="O20544"/>
<dbReference type="GO" id="GO:0005743">
    <property type="term" value="C:mitochondrial inner membrane"/>
    <property type="evidence" value="ECO:0007669"/>
    <property type="project" value="UniProtKB-SubCell"/>
</dbReference>
<dbReference type="GO" id="GO:0045275">
    <property type="term" value="C:respiratory chain complex III"/>
    <property type="evidence" value="ECO:0007669"/>
    <property type="project" value="InterPro"/>
</dbReference>
<dbReference type="GO" id="GO:0046872">
    <property type="term" value="F:metal ion binding"/>
    <property type="evidence" value="ECO:0007669"/>
    <property type="project" value="UniProtKB-KW"/>
</dbReference>
<dbReference type="GO" id="GO:0008121">
    <property type="term" value="F:ubiquinol-cytochrome-c reductase activity"/>
    <property type="evidence" value="ECO:0007669"/>
    <property type="project" value="InterPro"/>
</dbReference>
<dbReference type="GO" id="GO:0006122">
    <property type="term" value="P:mitochondrial electron transport, ubiquinol to cytochrome c"/>
    <property type="evidence" value="ECO:0007669"/>
    <property type="project" value="TreeGrafter"/>
</dbReference>
<dbReference type="CDD" id="cd00290">
    <property type="entry name" value="cytochrome_b_C"/>
    <property type="match status" value="1"/>
</dbReference>
<dbReference type="CDD" id="cd00284">
    <property type="entry name" value="Cytochrome_b_N"/>
    <property type="match status" value="1"/>
</dbReference>
<dbReference type="FunFam" id="1.20.810.10:FF:000002">
    <property type="entry name" value="Cytochrome b"/>
    <property type="match status" value="1"/>
</dbReference>
<dbReference type="Gene3D" id="1.20.810.10">
    <property type="entry name" value="Cytochrome Bc1 Complex, Chain C"/>
    <property type="match status" value="1"/>
</dbReference>
<dbReference type="InterPro" id="IPR005798">
    <property type="entry name" value="Cyt_b/b6_C"/>
</dbReference>
<dbReference type="InterPro" id="IPR036150">
    <property type="entry name" value="Cyt_b/b6_C_sf"/>
</dbReference>
<dbReference type="InterPro" id="IPR005797">
    <property type="entry name" value="Cyt_b/b6_N"/>
</dbReference>
<dbReference type="InterPro" id="IPR027387">
    <property type="entry name" value="Cytb/b6-like_sf"/>
</dbReference>
<dbReference type="InterPro" id="IPR030689">
    <property type="entry name" value="Cytochrome_b"/>
</dbReference>
<dbReference type="InterPro" id="IPR048260">
    <property type="entry name" value="Cytochrome_b_C_euk/bac"/>
</dbReference>
<dbReference type="InterPro" id="IPR048259">
    <property type="entry name" value="Cytochrome_b_N_euk/bac"/>
</dbReference>
<dbReference type="InterPro" id="IPR016174">
    <property type="entry name" value="Di-haem_cyt_TM"/>
</dbReference>
<dbReference type="PANTHER" id="PTHR19271">
    <property type="entry name" value="CYTOCHROME B"/>
    <property type="match status" value="1"/>
</dbReference>
<dbReference type="PANTHER" id="PTHR19271:SF16">
    <property type="entry name" value="CYTOCHROME B"/>
    <property type="match status" value="1"/>
</dbReference>
<dbReference type="Pfam" id="PF00032">
    <property type="entry name" value="Cytochrom_B_C"/>
    <property type="match status" value="1"/>
</dbReference>
<dbReference type="Pfam" id="PF00033">
    <property type="entry name" value="Cytochrome_B"/>
    <property type="match status" value="1"/>
</dbReference>
<dbReference type="PIRSF" id="PIRSF038885">
    <property type="entry name" value="COB"/>
    <property type="match status" value="1"/>
</dbReference>
<dbReference type="SUPFAM" id="SSF81648">
    <property type="entry name" value="a domain/subunit of cytochrome bc1 complex (Ubiquinol-cytochrome c reductase)"/>
    <property type="match status" value="1"/>
</dbReference>
<dbReference type="SUPFAM" id="SSF81342">
    <property type="entry name" value="Transmembrane di-heme cytochromes"/>
    <property type="match status" value="1"/>
</dbReference>
<dbReference type="PROSITE" id="PS51003">
    <property type="entry name" value="CYTB_CTER"/>
    <property type="match status" value="1"/>
</dbReference>
<dbReference type="PROSITE" id="PS51002">
    <property type="entry name" value="CYTB_NTER"/>
    <property type="match status" value="1"/>
</dbReference>
<protein>
    <recommendedName>
        <fullName>Cytochrome b</fullName>
    </recommendedName>
    <alternativeName>
        <fullName>Complex III subunit 3</fullName>
    </alternativeName>
    <alternativeName>
        <fullName>Complex III subunit III</fullName>
    </alternativeName>
    <alternativeName>
        <fullName>Cytochrome b-c1 complex subunit 3</fullName>
    </alternativeName>
    <alternativeName>
        <fullName>Ubiquinol-cytochrome-c reductase complex cytochrome b subunit</fullName>
    </alternativeName>
</protein>
<evidence type="ECO:0000250" key="1"/>
<evidence type="ECO:0000250" key="2">
    <source>
        <dbReference type="UniProtKB" id="P00157"/>
    </source>
</evidence>
<evidence type="ECO:0000255" key="3">
    <source>
        <dbReference type="PROSITE-ProRule" id="PRU00967"/>
    </source>
</evidence>
<evidence type="ECO:0000255" key="4">
    <source>
        <dbReference type="PROSITE-ProRule" id="PRU00968"/>
    </source>
</evidence>
<geneLocation type="mitochondrion"/>
<name>CYB_CTELE</name>
<accession>O20544</accession>
<sequence>MTNTRKSHPLIKIVNHSFIDLPAPSNISAWWNFGSLLGMCLGLQILTGLFLAMHYTADTTTAFSSVTHICRDVNYGWLIRYMHANGASMFFIFLYFHIGRGIYYGSYTFTDTWNMGVLLLLTTMATAFMGYVLPWGQMSFWGATVITNLLSAIPYIGPTLVEWIWGGFSVDKATLTRFFAFHFILPFIITAMVMIHLLFLHETGSNNPSGMNSDSDKIPFHPYYTIKDILGALFMIITLMSLVMFSPDLLGDPDNYAPANPLNTPPHIKPEWYFLFAYAILRSIPNKLGGVLALASSILILMLFPILHLSKQRSMSFRPLSQCLMWMLVTNLLILTWIGGQPVEYPFITIGQMASMTYFFTTLILMPLTALMENKLLKW</sequence>
<reference key="1">
    <citation type="journal article" date="1998" name="Mol. Phylogenet. Evol.">
        <title>The molecular phylogenetics of tuco-tucos (genus Ctenomys, Rodentia: Octodontidae) suggests an early burst of speciation.</title>
        <authorList>
            <person name="Lessa E.P."/>
            <person name="Cook J.A."/>
        </authorList>
    </citation>
    <scope>NUCLEOTIDE SEQUENCE [GENOMIC DNA]</scope>
</reference>
<comment type="function">
    <text evidence="2">Component of the ubiquinol-cytochrome c reductase complex (complex III or cytochrome b-c1 complex) that is part of the mitochondrial respiratory chain. The b-c1 complex mediates electron transfer from ubiquinol to cytochrome c. Contributes to the generation of a proton gradient across the mitochondrial membrane that is then used for ATP synthesis.</text>
</comment>
<comment type="cofactor">
    <cofactor evidence="2">
        <name>heme b</name>
        <dbReference type="ChEBI" id="CHEBI:60344"/>
    </cofactor>
    <text evidence="2">Binds 2 heme b groups non-covalently.</text>
</comment>
<comment type="subunit">
    <text evidence="2">The cytochrome bc1 complex contains 11 subunits: 3 respiratory subunits (MT-CYB, CYC1 and UQCRFS1), 2 core proteins (UQCRC1 and UQCRC2) and 6 low-molecular weight proteins (UQCRH/QCR6, UQCRB/QCR7, UQCRQ/QCR8, UQCR10/QCR9, UQCR11/QCR10 and a cleavage product of UQCRFS1). This cytochrome bc1 complex then forms a dimer.</text>
</comment>
<comment type="subcellular location">
    <subcellularLocation>
        <location evidence="2">Mitochondrion inner membrane</location>
        <topology evidence="2">Multi-pass membrane protein</topology>
    </subcellularLocation>
</comment>
<comment type="miscellaneous">
    <text evidence="1">Heme 1 (or BL or b562) is low-potential and absorbs at about 562 nm, and heme 2 (or BH or b566) is high-potential and absorbs at about 566 nm.</text>
</comment>
<comment type="similarity">
    <text evidence="3 4">Belongs to the cytochrome b family.</text>
</comment>
<comment type="caution">
    <text evidence="2">The full-length protein contains only eight transmembrane helices, not nine as predicted by bioinformatics tools.</text>
</comment>
<proteinExistence type="inferred from homology"/>
<keyword id="KW-0249">Electron transport</keyword>
<keyword id="KW-0349">Heme</keyword>
<keyword id="KW-0408">Iron</keyword>
<keyword id="KW-0472">Membrane</keyword>
<keyword id="KW-0479">Metal-binding</keyword>
<keyword id="KW-0496">Mitochondrion</keyword>
<keyword id="KW-0999">Mitochondrion inner membrane</keyword>
<keyword id="KW-0679">Respiratory chain</keyword>
<keyword id="KW-0812">Transmembrane</keyword>
<keyword id="KW-1133">Transmembrane helix</keyword>
<keyword id="KW-0813">Transport</keyword>
<keyword id="KW-0830">Ubiquinone</keyword>
<feature type="chain" id="PRO_0000255023" description="Cytochrome b">
    <location>
        <begin position="1"/>
        <end position="379"/>
    </location>
</feature>
<feature type="transmembrane region" description="Helical" evidence="2">
    <location>
        <begin position="33"/>
        <end position="53"/>
    </location>
</feature>
<feature type="transmembrane region" description="Helical" evidence="2">
    <location>
        <begin position="77"/>
        <end position="98"/>
    </location>
</feature>
<feature type="transmembrane region" description="Helical" evidence="2">
    <location>
        <begin position="113"/>
        <end position="133"/>
    </location>
</feature>
<feature type="transmembrane region" description="Helical" evidence="2">
    <location>
        <begin position="178"/>
        <end position="198"/>
    </location>
</feature>
<feature type="transmembrane region" description="Helical" evidence="2">
    <location>
        <begin position="226"/>
        <end position="246"/>
    </location>
</feature>
<feature type="transmembrane region" description="Helical" evidence="2">
    <location>
        <begin position="288"/>
        <end position="308"/>
    </location>
</feature>
<feature type="transmembrane region" description="Helical" evidence="2">
    <location>
        <begin position="320"/>
        <end position="340"/>
    </location>
</feature>
<feature type="transmembrane region" description="Helical" evidence="2">
    <location>
        <begin position="347"/>
        <end position="367"/>
    </location>
</feature>
<feature type="binding site" description="axial binding residue" evidence="2">
    <location>
        <position position="83"/>
    </location>
    <ligand>
        <name>heme b</name>
        <dbReference type="ChEBI" id="CHEBI:60344"/>
        <label>b562</label>
    </ligand>
    <ligandPart>
        <name>Fe</name>
        <dbReference type="ChEBI" id="CHEBI:18248"/>
    </ligandPart>
</feature>
<feature type="binding site" description="axial binding residue" evidence="2">
    <location>
        <position position="97"/>
    </location>
    <ligand>
        <name>heme b</name>
        <dbReference type="ChEBI" id="CHEBI:60344"/>
        <label>b566</label>
    </ligand>
    <ligandPart>
        <name>Fe</name>
        <dbReference type="ChEBI" id="CHEBI:18248"/>
    </ligandPart>
</feature>
<feature type="binding site" description="axial binding residue" evidence="2">
    <location>
        <position position="182"/>
    </location>
    <ligand>
        <name>heme b</name>
        <dbReference type="ChEBI" id="CHEBI:60344"/>
        <label>b562</label>
    </ligand>
    <ligandPart>
        <name>Fe</name>
        <dbReference type="ChEBI" id="CHEBI:18248"/>
    </ligandPart>
</feature>
<feature type="binding site" description="axial binding residue" evidence="2">
    <location>
        <position position="196"/>
    </location>
    <ligand>
        <name>heme b</name>
        <dbReference type="ChEBI" id="CHEBI:60344"/>
        <label>b566</label>
    </ligand>
    <ligandPart>
        <name>Fe</name>
        <dbReference type="ChEBI" id="CHEBI:18248"/>
    </ligandPart>
</feature>
<feature type="binding site" evidence="2">
    <location>
        <position position="201"/>
    </location>
    <ligand>
        <name>a ubiquinone</name>
        <dbReference type="ChEBI" id="CHEBI:16389"/>
    </ligand>
</feature>
<organism>
    <name type="scientific">Ctenomys leucodon</name>
    <name type="common">White-toothed tuco-tuco</name>
    <dbReference type="NCBI Taxonomy" id="61871"/>
    <lineage>
        <taxon>Eukaryota</taxon>
        <taxon>Metazoa</taxon>
        <taxon>Chordata</taxon>
        <taxon>Craniata</taxon>
        <taxon>Vertebrata</taxon>
        <taxon>Euteleostomi</taxon>
        <taxon>Mammalia</taxon>
        <taxon>Eutheria</taxon>
        <taxon>Euarchontoglires</taxon>
        <taxon>Glires</taxon>
        <taxon>Rodentia</taxon>
        <taxon>Hystricomorpha</taxon>
        <taxon>Ctenomyidae</taxon>
        <taxon>Ctenomys</taxon>
    </lineage>
</organism>